<organism>
    <name type="scientific">Bacillus thuringiensis subsp. konkukian (strain 97-27)</name>
    <dbReference type="NCBI Taxonomy" id="281309"/>
    <lineage>
        <taxon>Bacteria</taxon>
        <taxon>Bacillati</taxon>
        <taxon>Bacillota</taxon>
        <taxon>Bacilli</taxon>
        <taxon>Bacillales</taxon>
        <taxon>Bacillaceae</taxon>
        <taxon>Bacillus</taxon>
        <taxon>Bacillus cereus group</taxon>
    </lineage>
</organism>
<accession>Q6HLU7</accession>
<comment type="function">
    <text evidence="1">Catalyzes the transfer of the phosphoribosyl group of 5-phosphorylribose-1-pyrophosphate (PRPP) to anthranilate to yield N-(5'-phosphoribosyl)-anthranilate (PRA).</text>
</comment>
<comment type="catalytic activity">
    <reaction evidence="1">
        <text>N-(5-phospho-beta-D-ribosyl)anthranilate + diphosphate = 5-phospho-alpha-D-ribose 1-diphosphate + anthranilate</text>
        <dbReference type="Rhea" id="RHEA:11768"/>
        <dbReference type="ChEBI" id="CHEBI:16567"/>
        <dbReference type="ChEBI" id="CHEBI:18277"/>
        <dbReference type="ChEBI" id="CHEBI:33019"/>
        <dbReference type="ChEBI" id="CHEBI:58017"/>
        <dbReference type="EC" id="2.4.2.18"/>
    </reaction>
</comment>
<comment type="cofactor">
    <cofactor evidence="1">
        <name>Mg(2+)</name>
        <dbReference type="ChEBI" id="CHEBI:18420"/>
    </cofactor>
    <text evidence="1">Binds 2 magnesium ions per monomer.</text>
</comment>
<comment type="pathway">
    <text evidence="1">Amino-acid biosynthesis; L-tryptophan biosynthesis; L-tryptophan from chorismate: step 2/5.</text>
</comment>
<comment type="subunit">
    <text evidence="1">Homodimer.</text>
</comment>
<comment type="similarity">
    <text evidence="1">Belongs to the anthranilate phosphoribosyltransferase family.</text>
</comment>
<reference key="1">
    <citation type="journal article" date="2006" name="J. Bacteriol.">
        <title>Pathogenomic sequence analysis of Bacillus cereus and Bacillus thuringiensis isolates closely related to Bacillus anthracis.</title>
        <authorList>
            <person name="Han C.S."/>
            <person name="Xie G."/>
            <person name="Challacombe J.F."/>
            <person name="Altherr M.R."/>
            <person name="Bhotika S.S."/>
            <person name="Bruce D."/>
            <person name="Campbell C.S."/>
            <person name="Campbell M.L."/>
            <person name="Chen J."/>
            <person name="Chertkov O."/>
            <person name="Cleland C."/>
            <person name="Dimitrijevic M."/>
            <person name="Doggett N.A."/>
            <person name="Fawcett J.J."/>
            <person name="Glavina T."/>
            <person name="Goodwin L.A."/>
            <person name="Hill K.K."/>
            <person name="Hitchcock P."/>
            <person name="Jackson P.J."/>
            <person name="Keim P."/>
            <person name="Kewalramani A.R."/>
            <person name="Longmire J."/>
            <person name="Lucas S."/>
            <person name="Malfatti S."/>
            <person name="McMurry K."/>
            <person name="Meincke L.J."/>
            <person name="Misra M."/>
            <person name="Moseman B.L."/>
            <person name="Mundt M."/>
            <person name="Munk A.C."/>
            <person name="Okinaka R.T."/>
            <person name="Parson-Quintana B."/>
            <person name="Reilly L.P."/>
            <person name="Richardson P."/>
            <person name="Robinson D.L."/>
            <person name="Rubin E."/>
            <person name="Saunders E."/>
            <person name="Tapia R."/>
            <person name="Tesmer J.G."/>
            <person name="Thayer N."/>
            <person name="Thompson L.S."/>
            <person name="Tice H."/>
            <person name="Ticknor L.O."/>
            <person name="Wills P.L."/>
            <person name="Brettin T.S."/>
            <person name="Gilna P."/>
        </authorList>
    </citation>
    <scope>NUCLEOTIDE SEQUENCE [LARGE SCALE GENOMIC DNA]</scope>
    <source>
        <strain>97-27</strain>
    </source>
</reference>
<dbReference type="EC" id="2.4.2.18" evidence="1"/>
<dbReference type="EMBL" id="AE017355">
    <property type="protein sequence ID" value="AAT59356.1"/>
    <property type="molecule type" value="Genomic_DNA"/>
</dbReference>
<dbReference type="RefSeq" id="WP_001067352.1">
    <property type="nucleotide sequence ID" value="NC_005957.1"/>
</dbReference>
<dbReference type="RefSeq" id="YP_035474.1">
    <property type="nucleotide sequence ID" value="NC_005957.1"/>
</dbReference>
<dbReference type="SMR" id="Q6HLU7"/>
<dbReference type="KEGG" id="btk:BT9727_1138"/>
<dbReference type="PATRIC" id="fig|281309.8.peg.1197"/>
<dbReference type="HOGENOM" id="CLU_034315_2_1_9"/>
<dbReference type="UniPathway" id="UPA00035">
    <property type="reaction ID" value="UER00041"/>
</dbReference>
<dbReference type="Proteomes" id="UP000001301">
    <property type="component" value="Chromosome"/>
</dbReference>
<dbReference type="GO" id="GO:0005829">
    <property type="term" value="C:cytosol"/>
    <property type="evidence" value="ECO:0007669"/>
    <property type="project" value="TreeGrafter"/>
</dbReference>
<dbReference type="GO" id="GO:0004048">
    <property type="term" value="F:anthranilate phosphoribosyltransferase activity"/>
    <property type="evidence" value="ECO:0007669"/>
    <property type="project" value="UniProtKB-UniRule"/>
</dbReference>
<dbReference type="GO" id="GO:0000287">
    <property type="term" value="F:magnesium ion binding"/>
    <property type="evidence" value="ECO:0007669"/>
    <property type="project" value="UniProtKB-UniRule"/>
</dbReference>
<dbReference type="GO" id="GO:0000162">
    <property type="term" value="P:L-tryptophan biosynthetic process"/>
    <property type="evidence" value="ECO:0007669"/>
    <property type="project" value="UniProtKB-UniRule"/>
</dbReference>
<dbReference type="FunFam" id="3.40.1030.10:FF:000002">
    <property type="entry name" value="Anthranilate phosphoribosyltransferase"/>
    <property type="match status" value="1"/>
</dbReference>
<dbReference type="Gene3D" id="3.40.1030.10">
    <property type="entry name" value="Nucleoside phosphorylase/phosphoribosyltransferase catalytic domain"/>
    <property type="match status" value="1"/>
</dbReference>
<dbReference type="Gene3D" id="1.20.970.10">
    <property type="entry name" value="Transferase, Pyrimidine Nucleoside Phosphorylase, Chain C"/>
    <property type="match status" value="1"/>
</dbReference>
<dbReference type="HAMAP" id="MF_00211">
    <property type="entry name" value="TrpD"/>
    <property type="match status" value="1"/>
</dbReference>
<dbReference type="InterPro" id="IPR005940">
    <property type="entry name" value="Anthranilate_Pribosyl_Tfrase"/>
</dbReference>
<dbReference type="InterPro" id="IPR000312">
    <property type="entry name" value="Glycosyl_Trfase_fam3"/>
</dbReference>
<dbReference type="InterPro" id="IPR017459">
    <property type="entry name" value="Glycosyl_Trfase_fam3_N_dom"/>
</dbReference>
<dbReference type="InterPro" id="IPR036320">
    <property type="entry name" value="Glycosyl_Trfase_fam3_N_dom_sf"/>
</dbReference>
<dbReference type="InterPro" id="IPR035902">
    <property type="entry name" value="Nuc_phospho_transferase"/>
</dbReference>
<dbReference type="NCBIfam" id="TIGR01245">
    <property type="entry name" value="trpD"/>
    <property type="match status" value="1"/>
</dbReference>
<dbReference type="PANTHER" id="PTHR43285">
    <property type="entry name" value="ANTHRANILATE PHOSPHORIBOSYLTRANSFERASE"/>
    <property type="match status" value="1"/>
</dbReference>
<dbReference type="PANTHER" id="PTHR43285:SF2">
    <property type="entry name" value="ANTHRANILATE PHOSPHORIBOSYLTRANSFERASE"/>
    <property type="match status" value="1"/>
</dbReference>
<dbReference type="Pfam" id="PF02885">
    <property type="entry name" value="Glycos_trans_3N"/>
    <property type="match status" value="1"/>
</dbReference>
<dbReference type="Pfam" id="PF00591">
    <property type="entry name" value="Glycos_transf_3"/>
    <property type="match status" value="1"/>
</dbReference>
<dbReference type="SUPFAM" id="SSF52418">
    <property type="entry name" value="Nucleoside phosphorylase/phosphoribosyltransferase catalytic domain"/>
    <property type="match status" value="1"/>
</dbReference>
<dbReference type="SUPFAM" id="SSF47648">
    <property type="entry name" value="Nucleoside phosphorylase/phosphoribosyltransferase N-terminal domain"/>
    <property type="match status" value="1"/>
</dbReference>
<proteinExistence type="inferred from homology"/>
<name>TRPD_BACHK</name>
<keyword id="KW-0028">Amino-acid biosynthesis</keyword>
<keyword id="KW-0057">Aromatic amino acid biosynthesis</keyword>
<keyword id="KW-0328">Glycosyltransferase</keyword>
<keyword id="KW-0460">Magnesium</keyword>
<keyword id="KW-0479">Metal-binding</keyword>
<keyword id="KW-0808">Transferase</keyword>
<keyword id="KW-0822">Tryptophan biosynthesis</keyword>
<feature type="chain" id="PRO_0000227135" description="Anthranilate phosphoribosyltransferase">
    <location>
        <begin position="1"/>
        <end position="341"/>
    </location>
</feature>
<feature type="binding site" evidence="1">
    <location>
        <position position="79"/>
    </location>
    <ligand>
        <name>5-phospho-alpha-D-ribose 1-diphosphate</name>
        <dbReference type="ChEBI" id="CHEBI:58017"/>
    </ligand>
</feature>
<feature type="binding site" evidence="1">
    <location>
        <position position="79"/>
    </location>
    <ligand>
        <name>anthranilate</name>
        <dbReference type="ChEBI" id="CHEBI:16567"/>
        <label>1</label>
    </ligand>
</feature>
<feature type="binding site" evidence="1">
    <location>
        <begin position="82"/>
        <end position="83"/>
    </location>
    <ligand>
        <name>5-phospho-alpha-D-ribose 1-diphosphate</name>
        <dbReference type="ChEBI" id="CHEBI:58017"/>
    </ligand>
</feature>
<feature type="binding site" evidence="1">
    <location>
        <position position="87"/>
    </location>
    <ligand>
        <name>5-phospho-alpha-D-ribose 1-diphosphate</name>
        <dbReference type="ChEBI" id="CHEBI:58017"/>
    </ligand>
</feature>
<feature type="binding site" evidence="1">
    <location>
        <begin position="89"/>
        <end position="92"/>
    </location>
    <ligand>
        <name>5-phospho-alpha-D-ribose 1-diphosphate</name>
        <dbReference type="ChEBI" id="CHEBI:58017"/>
    </ligand>
</feature>
<feature type="binding site" evidence="1">
    <location>
        <position position="91"/>
    </location>
    <ligand>
        <name>Mg(2+)</name>
        <dbReference type="ChEBI" id="CHEBI:18420"/>
        <label>1</label>
    </ligand>
</feature>
<feature type="binding site" evidence="1">
    <location>
        <begin position="107"/>
        <end position="115"/>
    </location>
    <ligand>
        <name>5-phospho-alpha-D-ribose 1-diphosphate</name>
        <dbReference type="ChEBI" id="CHEBI:58017"/>
    </ligand>
</feature>
<feature type="binding site" evidence="1">
    <location>
        <position position="110"/>
    </location>
    <ligand>
        <name>anthranilate</name>
        <dbReference type="ChEBI" id="CHEBI:16567"/>
        <label>1</label>
    </ligand>
</feature>
<feature type="binding site" evidence="1">
    <location>
        <position position="119"/>
    </location>
    <ligand>
        <name>5-phospho-alpha-D-ribose 1-diphosphate</name>
        <dbReference type="ChEBI" id="CHEBI:58017"/>
    </ligand>
</feature>
<feature type="binding site" evidence="1">
    <location>
        <position position="165"/>
    </location>
    <ligand>
        <name>anthranilate</name>
        <dbReference type="ChEBI" id="CHEBI:16567"/>
        <label>2</label>
    </ligand>
</feature>
<feature type="binding site" evidence="1">
    <location>
        <position position="224"/>
    </location>
    <ligand>
        <name>Mg(2+)</name>
        <dbReference type="ChEBI" id="CHEBI:18420"/>
        <label>2</label>
    </ligand>
</feature>
<feature type="binding site" evidence="1">
    <location>
        <position position="225"/>
    </location>
    <ligand>
        <name>Mg(2+)</name>
        <dbReference type="ChEBI" id="CHEBI:18420"/>
        <label>1</label>
    </ligand>
</feature>
<feature type="binding site" evidence="1">
    <location>
        <position position="225"/>
    </location>
    <ligand>
        <name>Mg(2+)</name>
        <dbReference type="ChEBI" id="CHEBI:18420"/>
        <label>2</label>
    </ligand>
</feature>
<sequence>MNNYLRKLVEGQHLTEEEMYKAGLLLLNENILESEIAAFLVLLKAKGETAEEIYGLVRALREKALPFSNHIQGAMDNCGTGGDGAQTFNISTTSAFVLAGAGVKVAKHGNRAVSSKTGSADLLEELGVNISSTPNEIDYLLKHVGIAFLFAPAMHPALKRIMKIRKELNVPTIFNLIGPLTNPVNLETQFVGIYKRDMLLPVAQVLQKLGRKQALVVNGSGFLDEASLQGENHVVILKDNEIVETSIEPEKYGFSIVKNEEIRGGNSKENAKITLGVLSGEKSVYRDTVLFNAGLALFANGKAKTIEEGITLAAHSIDSGKALAKLNLLIAASNEKLERVN</sequence>
<gene>
    <name evidence="1" type="primary">trpD</name>
    <name type="ordered locus">BT9727_1138</name>
</gene>
<protein>
    <recommendedName>
        <fullName evidence="1">Anthranilate phosphoribosyltransferase</fullName>
        <ecNumber evidence="1">2.4.2.18</ecNumber>
    </recommendedName>
</protein>
<evidence type="ECO:0000255" key="1">
    <source>
        <dbReference type="HAMAP-Rule" id="MF_00211"/>
    </source>
</evidence>